<keyword id="KW-1185">Reference proteome</keyword>
<feature type="chain" id="PRO_0000065310" description="Uncharacterized protein F22B7.9">
    <location>
        <begin position="1"/>
        <end position="243"/>
    </location>
</feature>
<reference key="1">
    <citation type="journal article" date="1994" name="Nature">
        <title>2.2 Mb of contiguous nucleotide sequence from chromosome III of C. elegans.</title>
        <authorList>
            <person name="Wilson R."/>
            <person name="Ainscough R."/>
            <person name="Anderson K."/>
            <person name="Baynes C."/>
            <person name="Berks M."/>
            <person name="Bonfield J."/>
            <person name="Burton J."/>
            <person name="Connell M."/>
            <person name="Copsey T."/>
            <person name="Cooper J."/>
            <person name="Coulson A."/>
            <person name="Craxton M."/>
            <person name="Dear S."/>
            <person name="Du Z."/>
            <person name="Durbin R."/>
            <person name="Favello A."/>
            <person name="Fraser A."/>
            <person name="Fulton L."/>
            <person name="Gardner A."/>
            <person name="Green P."/>
            <person name="Hawkins T."/>
            <person name="Hillier L."/>
            <person name="Jier M."/>
            <person name="Johnston L."/>
            <person name="Jones M."/>
            <person name="Kershaw J."/>
            <person name="Kirsten J."/>
            <person name="Laisster N."/>
            <person name="Latreille P."/>
            <person name="Lightning J."/>
            <person name="Lloyd C."/>
            <person name="Mortimore B."/>
            <person name="O'Callaghan M."/>
            <person name="Parsons J."/>
            <person name="Percy C."/>
            <person name="Rifken L."/>
            <person name="Roopra A."/>
            <person name="Saunders D."/>
            <person name="Shownkeen R."/>
            <person name="Sims M."/>
            <person name="Smaldon N."/>
            <person name="Smith A."/>
            <person name="Smith M."/>
            <person name="Sonnhammer E."/>
            <person name="Staden R."/>
            <person name="Sulston J."/>
            <person name="Thierry-Mieg J."/>
            <person name="Thomas K."/>
            <person name="Vaudin M."/>
            <person name="Vaughan K."/>
            <person name="Waterston R."/>
            <person name="Watson A."/>
            <person name="Weinstock L."/>
            <person name="Wilkinson-Sproat J."/>
            <person name="Wohldman P."/>
        </authorList>
    </citation>
    <scope>NUCLEOTIDE SEQUENCE [LARGE SCALE GENOMIC DNA]</scope>
    <source>
        <strain>Bristol N2</strain>
    </source>
</reference>
<reference key="2">
    <citation type="journal article" date="1998" name="Science">
        <title>Genome sequence of the nematode C. elegans: a platform for investigating biology.</title>
        <authorList>
            <consortium name="The C. elegans sequencing consortium"/>
        </authorList>
    </citation>
    <scope>NUCLEOTIDE SEQUENCE [LARGE SCALE GENOMIC DNA]</scope>
    <source>
        <strain>Bristol N2</strain>
    </source>
</reference>
<dbReference type="EMBL" id="FO080222">
    <property type="protein sequence ID" value="CCD62138.1"/>
    <property type="molecule type" value="Genomic_DNA"/>
</dbReference>
<dbReference type="RefSeq" id="NP_498908.2">
    <property type="nucleotide sequence ID" value="NM_066507.4"/>
</dbReference>
<dbReference type="SMR" id="P34412"/>
<dbReference type="FunCoup" id="P34412">
    <property type="interactions" value="63"/>
</dbReference>
<dbReference type="STRING" id="6239.F22B7.9.1"/>
<dbReference type="PaxDb" id="6239-F22B7.9"/>
<dbReference type="PeptideAtlas" id="P34412"/>
<dbReference type="EnsemblMetazoa" id="F22B7.9.1">
    <property type="protein sequence ID" value="F22B7.9.1"/>
    <property type="gene ID" value="WBGene00017698"/>
</dbReference>
<dbReference type="GeneID" id="176213"/>
<dbReference type="KEGG" id="cel:CELE_F22B7.9"/>
<dbReference type="UCSC" id="F22B7.9">
    <property type="organism name" value="c. elegans"/>
</dbReference>
<dbReference type="AGR" id="WB:WBGene00017698"/>
<dbReference type="CTD" id="176213"/>
<dbReference type="WormBase" id="F22B7.9">
    <property type="protein sequence ID" value="CE29771"/>
    <property type="gene ID" value="WBGene00017698"/>
</dbReference>
<dbReference type="eggNOG" id="KOG2920">
    <property type="taxonomic scope" value="Eukaryota"/>
</dbReference>
<dbReference type="GeneTree" id="ENSGT00390000000464"/>
<dbReference type="HOGENOM" id="CLU_097314_0_0_1"/>
<dbReference type="InParanoid" id="P34412"/>
<dbReference type="OMA" id="DDWEGVN"/>
<dbReference type="OrthoDB" id="1723750at2759"/>
<dbReference type="PhylomeDB" id="P34412"/>
<dbReference type="PRO" id="PR:P34412"/>
<dbReference type="Proteomes" id="UP000001940">
    <property type="component" value="Chromosome III"/>
</dbReference>
<dbReference type="Bgee" id="WBGene00017698">
    <property type="expression patterns" value="Expressed in larva and 3 other cell types or tissues"/>
</dbReference>
<dbReference type="GO" id="GO:0005737">
    <property type="term" value="C:cytoplasm"/>
    <property type="evidence" value="ECO:0000318"/>
    <property type="project" value="GO_Central"/>
</dbReference>
<dbReference type="GO" id="GO:0005634">
    <property type="term" value="C:nucleus"/>
    <property type="evidence" value="ECO:0000318"/>
    <property type="project" value="GO_Central"/>
</dbReference>
<dbReference type="GO" id="GO:0035642">
    <property type="term" value="F:histone H3R17 methyltransferase activity"/>
    <property type="evidence" value="ECO:0000318"/>
    <property type="project" value="GO_Central"/>
</dbReference>
<dbReference type="GO" id="GO:0040029">
    <property type="term" value="P:epigenetic regulation of gene expression"/>
    <property type="evidence" value="ECO:0000318"/>
    <property type="project" value="GO_Central"/>
</dbReference>
<dbReference type="Gene3D" id="3.40.50.150">
    <property type="entry name" value="Vaccinia Virus protein VP39"/>
    <property type="match status" value="1"/>
</dbReference>
<dbReference type="InterPro" id="IPR029063">
    <property type="entry name" value="SAM-dependent_MTases_sf"/>
</dbReference>
<dbReference type="SUPFAM" id="SSF53335">
    <property type="entry name" value="S-adenosyl-L-methionine-dependent methyltransferases"/>
    <property type="match status" value="1"/>
</dbReference>
<proteinExistence type="predicted"/>
<organism>
    <name type="scientific">Caenorhabditis elegans</name>
    <dbReference type="NCBI Taxonomy" id="6239"/>
    <lineage>
        <taxon>Eukaryota</taxon>
        <taxon>Metazoa</taxon>
        <taxon>Ecdysozoa</taxon>
        <taxon>Nematoda</taxon>
        <taxon>Chromadorea</taxon>
        <taxon>Rhabditida</taxon>
        <taxon>Rhabditina</taxon>
        <taxon>Rhabditomorpha</taxon>
        <taxon>Rhabditoidea</taxon>
        <taxon>Rhabditidae</taxon>
        <taxon>Peloderinae</taxon>
        <taxon>Caenorhabditis</taxon>
    </lineage>
</organism>
<accession>P34412</accession>
<sequence>MVLTIPTIASVAPVNCELSLDSGRCIKYVATRNSNPKNHVAEELPIMRKNSHQDHHDDWEGVNTICHTIDNIVNVEMETDFFDGKSVLEIGFVTGLPSVYAFENGAEEIAMHTMDKTSLELYCRPTLKRNNIPMIKTKVSCGTIEEAMKFLGGKKFDIILAPDLLNRQEAEFDLVHEILHQGLSYDGICLFSCRTHYANVDGSLTAFLQLVKRRREFEAIERWSSPRTDIIQQKVFQLTRSLF</sequence>
<protein>
    <recommendedName>
        <fullName>Uncharacterized protein F22B7.9</fullName>
    </recommendedName>
</protein>
<name>YLW9_CAEEL</name>
<gene>
    <name type="ORF">F22B7.9</name>
</gene>